<gene>
    <name evidence="1" type="primary">fabZ</name>
    <name type="ordered locus">HD_1188</name>
</gene>
<keyword id="KW-0963">Cytoplasm</keyword>
<keyword id="KW-0441">Lipid A biosynthesis</keyword>
<keyword id="KW-0444">Lipid biosynthesis</keyword>
<keyword id="KW-0443">Lipid metabolism</keyword>
<keyword id="KW-0456">Lyase</keyword>
<keyword id="KW-1185">Reference proteome</keyword>
<protein>
    <recommendedName>
        <fullName evidence="1">3-hydroxyacyl-[acyl-carrier-protein] dehydratase FabZ</fullName>
        <ecNumber evidence="1">4.2.1.59</ecNumber>
    </recommendedName>
    <alternativeName>
        <fullName evidence="1">(3R)-hydroxymyristoyl-[acyl-carrier-protein] dehydratase</fullName>
        <shortName evidence="1">(3R)-hydroxymyristoyl-ACP dehydrase</shortName>
    </alternativeName>
    <alternativeName>
        <fullName evidence="1">Beta-hydroxyacyl-ACP dehydratase</fullName>
    </alternativeName>
</protein>
<accession>Q7VM25</accession>
<comment type="function">
    <text evidence="1">Involved in unsaturated fatty acids biosynthesis. Catalyzes the dehydration of short chain beta-hydroxyacyl-ACPs and long chain saturated and unsaturated beta-hydroxyacyl-ACPs.</text>
</comment>
<comment type="catalytic activity">
    <reaction evidence="1">
        <text>a (3R)-hydroxyacyl-[ACP] = a (2E)-enoyl-[ACP] + H2O</text>
        <dbReference type="Rhea" id="RHEA:13097"/>
        <dbReference type="Rhea" id="RHEA-COMP:9925"/>
        <dbReference type="Rhea" id="RHEA-COMP:9945"/>
        <dbReference type="ChEBI" id="CHEBI:15377"/>
        <dbReference type="ChEBI" id="CHEBI:78784"/>
        <dbReference type="ChEBI" id="CHEBI:78827"/>
        <dbReference type="EC" id="4.2.1.59"/>
    </reaction>
</comment>
<comment type="subcellular location">
    <subcellularLocation>
        <location evidence="1">Cytoplasm</location>
    </subcellularLocation>
</comment>
<comment type="similarity">
    <text evidence="1">Belongs to the thioester dehydratase family. FabZ subfamily.</text>
</comment>
<name>FABZ_HAEDU</name>
<sequence length="154" mass="17360">MAIETAENRTPKVIEVTEIMNMLPHRYPFLLVDRVTDYEEGKWLRAIKNVTVNEPCFTGHFPSSPVFPGVLILEAMAQATGVLAVATYGKMREDELYYFAAIDNARFKRPVVPGDQLVLEVEFLKEIRGITKFTGKAYVNGKLACEADLMCARK</sequence>
<evidence type="ECO:0000255" key="1">
    <source>
        <dbReference type="HAMAP-Rule" id="MF_00406"/>
    </source>
</evidence>
<dbReference type="EC" id="4.2.1.59" evidence="1"/>
<dbReference type="EMBL" id="AE017143">
    <property type="protein sequence ID" value="AAP96038.1"/>
    <property type="molecule type" value="Genomic_DNA"/>
</dbReference>
<dbReference type="RefSeq" id="WP_010945087.1">
    <property type="nucleotide sequence ID" value="NC_002940.2"/>
</dbReference>
<dbReference type="SMR" id="Q7VM25"/>
<dbReference type="STRING" id="233412.HD_1188"/>
<dbReference type="KEGG" id="hdu:HD_1188"/>
<dbReference type="eggNOG" id="COG0764">
    <property type="taxonomic scope" value="Bacteria"/>
</dbReference>
<dbReference type="HOGENOM" id="CLU_078912_1_0_6"/>
<dbReference type="OrthoDB" id="9772788at2"/>
<dbReference type="Proteomes" id="UP000001022">
    <property type="component" value="Chromosome"/>
</dbReference>
<dbReference type="GO" id="GO:0005737">
    <property type="term" value="C:cytoplasm"/>
    <property type="evidence" value="ECO:0007669"/>
    <property type="project" value="UniProtKB-SubCell"/>
</dbReference>
<dbReference type="GO" id="GO:0016020">
    <property type="term" value="C:membrane"/>
    <property type="evidence" value="ECO:0007669"/>
    <property type="project" value="GOC"/>
</dbReference>
<dbReference type="GO" id="GO:0019171">
    <property type="term" value="F:(3R)-hydroxyacyl-[acyl-carrier-protein] dehydratase activity"/>
    <property type="evidence" value="ECO:0007669"/>
    <property type="project" value="UniProtKB-EC"/>
</dbReference>
<dbReference type="GO" id="GO:0006633">
    <property type="term" value="P:fatty acid biosynthetic process"/>
    <property type="evidence" value="ECO:0007669"/>
    <property type="project" value="UniProtKB-UniRule"/>
</dbReference>
<dbReference type="GO" id="GO:0009245">
    <property type="term" value="P:lipid A biosynthetic process"/>
    <property type="evidence" value="ECO:0007669"/>
    <property type="project" value="UniProtKB-UniRule"/>
</dbReference>
<dbReference type="CDD" id="cd01288">
    <property type="entry name" value="FabZ"/>
    <property type="match status" value="1"/>
</dbReference>
<dbReference type="FunFam" id="3.10.129.10:FF:000001">
    <property type="entry name" value="3-hydroxyacyl-[acyl-carrier-protein] dehydratase FabZ"/>
    <property type="match status" value="1"/>
</dbReference>
<dbReference type="Gene3D" id="3.10.129.10">
    <property type="entry name" value="Hotdog Thioesterase"/>
    <property type="match status" value="1"/>
</dbReference>
<dbReference type="HAMAP" id="MF_00406">
    <property type="entry name" value="FabZ"/>
    <property type="match status" value="1"/>
</dbReference>
<dbReference type="InterPro" id="IPR013114">
    <property type="entry name" value="FabA_FabZ"/>
</dbReference>
<dbReference type="InterPro" id="IPR010084">
    <property type="entry name" value="FabZ"/>
</dbReference>
<dbReference type="InterPro" id="IPR029069">
    <property type="entry name" value="HotDog_dom_sf"/>
</dbReference>
<dbReference type="NCBIfam" id="TIGR01750">
    <property type="entry name" value="fabZ"/>
    <property type="match status" value="1"/>
</dbReference>
<dbReference type="NCBIfam" id="NF000582">
    <property type="entry name" value="PRK00006.1"/>
    <property type="match status" value="1"/>
</dbReference>
<dbReference type="PANTHER" id="PTHR30272">
    <property type="entry name" value="3-HYDROXYACYL-[ACYL-CARRIER-PROTEIN] DEHYDRATASE"/>
    <property type="match status" value="1"/>
</dbReference>
<dbReference type="PANTHER" id="PTHR30272:SF1">
    <property type="entry name" value="3-HYDROXYACYL-[ACYL-CARRIER-PROTEIN] DEHYDRATASE"/>
    <property type="match status" value="1"/>
</dbReference>
<dbReference type="Pfam" id="PF07977">
    <property type="entry name" value="FabA"/>
    <property type="match status" value="1"/>
</dbReference>
<dbReference type="SUPFAM" id="SSF54637">
    <property type="entry name" value="Thioesterase/thiol ester dehydrase-isomerase"/>
    <property type="match status" value="1"/>
</dbReference>
<feature type="chain" id="PRO_0000091685" description="3-hydroxyacyl-[acyl-carrier-protein] dehydratase FabZ">
    <location>
        <begin position="1"/>
        <end position="154"/>
    </location>
</feature>
<feature type="active site" evidence="1">
    <location>
        <position position="60"/>
    </location>
</feature>
<reference key="1">
    <citation type="submission" date="2003-06" db="EMBL/GenBank/DDBJ databases">
        <title>The complete genome sequence of Haemophilus ducreyi.</title>
        <authorList>
            <person name="Munson R.S. Jr."/>
            <person name="Ray W.C."/>
            <person name="Mahairas G."/>
            <person name="Sabo P."/>
            <person name="Mungur R."/>
            <person name="Johnson L."/>
            <person name="Nguyen D."/>
            <person name="Wang J."/>
            <person name="Forst C."/>
            <person name="Hood L."/>
        </authorList>
    </citation>
    <scope>NUCLEOTIDE SEQUENCE [LARGE SCALE GENOMIC DNA]</scope>
    <source>
        <strain>35000HP / ATCC 700724</strain>
    </source>
</reference>
<proteinExistence type="inferred from homology"/>
<organism>
    <name type="scientific">Haemophilus ducreyi (strain 35000HP / ATCC 700724)</name>
    <dbReference type="NCBI Taxonomy" id="233412"/>
    <lineage>
        <taxon>Bacteria</taxon>
        <taxon>Pseudomonadati</taxon>
        <taxon>Pseudomonadota</taxon>
        <taxon>Gammaproteobacteria</taxon>
        <taxon>Pasteurellales</taxon>
        <taxon>Pasteurellaceae</taxon>
        <taxon>Haemophilus</taxon>
    </lineage>
</organism>